<proteinExistence type="inferred from homology"/>
<comment type="function">
    <text evidence="1">Catalyzes the synthesis of GMP from XMP.</text>
</comment>
<comment type="catalytic activity">
    <reaction evidence="1">
        <text>XMP + L-glutamine + ATP + H2O = GMP + L-glutamate + AMP + diphosphate + 2 H(+)</text>
        <dbReference type="Rhea" id="RHEA:11680"/>
        <dbReference type="ChEBI" id="CHEBI:15377"/>
        <dbReference type="ChEBI" id="CHEBI:15378"/>
        <dbReference type="ChEBI" id="CHEBI:29985"/>
        <dbReference type="ChEBI" id="CHEBI:30616"/>
        <dbReference type="ChEBI" id="CHEBI:33019"/>
        <dbReference type="ChEBI" id="CHEBI:57464"/>
        <dbReference type="ChEBI" id="CHEBI:58115"/>
        <dbReference type="ChEBI" id="CHEBI:58359"/>
        <dbReference type="ChEBI" id="CHEBI:456215"/>
        <dbReference type="EC" id="6.3.5.2"/>
    </reaction>
</comment>
<comment type="pathway">
    <text evidence="1">Purine metabolism; GMP biosynthesis; GMP from XMP (L-Gln route): step 1/1.</text>
</comment>
<comment type="subunit">
    <text evidence="1">Heterodimer composed of a glutamine amidotransferase subunit (A) and a GMP-binding subunit (B).</text>
</comment>
<evidence type="ECO:0000255" key="1">
    <source>
        <dbReference type="HAMAP-Rule" id="MF_01510"/>
    </source>
</evidence>
<sequence>MLPICVVNNYGQFNHLIHRALRDLDIDAVLIPNTTPREEIASQYRGIILGGGPDIARAGVCAEYLDLGIPVLGICLGLHIIARKFGGVVHPGKSGGYGSVEVTIREHDDILSGYPDIIPVWASHADEVCRIPEGFTLLASSGICEVEAVACPRKRIYGLQWHPEVSHTVGGKRVYENFDAICTE</sequence>
<reference key="1">
    <citation type="journal article" date="2015" name="Microbiology">
        <title>Genome of Methanoregula boonei 6A8 reveals adaptations to oligotrophic peatland environments.</title>
        <authorList>
            <person name="Braeuer S."/>
            <person name="Cadillo-Quiroz H."/>
            <person name="Kyrpides N."/>
            <person name="Woyke T."/>
            <person name="Goodwin L."/>
            <person name="Detter C."/>
            <person name="Podell S."/>
            <person name="Yavitt J.B."/>
            <person name="Zinder S.H."/>
        </authorList>
    </citation>
    <scope>NUCLEOTIDE SEQUENCE [LARGE SCALE GENOMIC DNA]</scope>
    <source>
        <strain>DSM 21154 / JCM 14090 / 6A8</strain>
    </source>
</reference>
<gene>
    <name evidence="1" type="primary">guaAA</name>
    <name type="ordered locus">Mboo_0704</name>
</gene>
<accession>A7I661</accession>
<feature type="chain" id="PRO_0000316097" description="GMP synthase [glutamine-hydrolyzing] subunit A">
    <location>
        <begin position="1"/>
        <end position="184"/>
    </location>
</feature>
<feature type="domain" description="Glutamine amidotransferase type-1" evidence="1">
    <location>
        <begin position="3"/>
        <end position="184"/>
    </location>
</feature>
<feature type="active site" description="Nucleophile" evidence="1">
    <location>
        <position position="75"/>
    </location>
</feature>
<feature type="active site" evidence="1">
    <location>
        <position position="162"/>
    </location>
</feature>
<feature type="active site" evidence="1">
    <location>
        <position position="164"/>
    </location>
</feature>
<organism>
    <name type="scientific">Methanoregula boonei (strain DSM 21154 / JCM 14090 / 6A8)</name>
    <dbReference type="NCBI Taxonomy" id="456442"/>
    <lineage>
        <taxon>Archaea</taxon>
        <taxon>Methanobacteriati</taxon>
        <taxon>Methanobacteriota</taxon>
        <taxon>Stenosarchaea group</taxon>
        <taxon>Methanomicrobia</taxon>
        <taxon>Methanomicrobiales</taxon>
        <taxon>Methanoregulaceae</taxon>
        <taxon>Methanoregula</taxon>
    </lineage>
</organism>
<keyword id="KW-0067">ATP-binding</keyword>
<keyword id="KW-0315">Glutamine amidotransferase</keyword>
<keyword id="KW-0332">GMP biosynthesis</keyword>
<keyword id="KW-0436">Ligase</keyword>
<keyword id="KW-0547">Nucleotide-binding</keyword>
<keyword id="KW-0658">Purine biosynthesis</keyword>
<keyword id="KW-1185">Reference proteome</keyword>
<dbReference type="EC" id="6.3.5.2" evidence="1"/>
<dbReference type="EMBL" id="CP000780">
    <property type="protein sequence ID" value="ABS55222.1"/>
    <property type="molecule type" value="Genomic_DNA"/>
</dbReference>
<dbReference type="RefSeq" id="WP_012106244.1">
    <property type="nucleotide sequence ID" value="NC_009712.1"/>
</dbReference>
<dbReference type="SMR" id="A7I661"/>
<dbReference type="STRING" id="456442.Mboo_0704"/>
<dbReference type="MEROPS" id="C26.A31"/>
<dbReference type="GeneID" id="5411558"/>
<dbReference type="KEGG" id="mbn:Mboo_0704"/>
<dbReference type="eggNOG" id="arCOG00087">
    <property type="taxonomic scope" value="Archaea"/>
</dbReference>
<dbReference type="HOGENOM" id="CLU_014340_1_4_2"/>
<dbReference type="OrthoDB" id="10772at2157"/>
<dbReference type="UniPathway" id="UPA00189">
    <property type="reaction ID" value="UER00296"/>
</dbReference>
<dbReference type="Proteomes" id="UP000002408">
    <property type="component" value="Chromosome"/>
</dbReference>
<dbReference type="GO" id="GO:0005829">
    <property type="term" value="C:cytosol"/>
    <property type="evidence" value="ECO:0007669"/>
    <property type="project" value="TreeGrafter"/>
</dbReference>
<dbReference type="GO" id="GO:0005524">
    <property type="term" value="F:ATP binding"/>
    <property type="evidence" value="ECO:0007669"/>
    <property type="project" value="UniProtKB-KW"/>
</dbReference>
<dbReference type="GO" id="GO:0003921">
    <property type="term" value="F:GMP synthase activity"/>
    <property type="evidence" value="ECO:0007669"/>
    <property type="project" value="TreeGrafter"/>
</dbReference>
<dbReference type="CDD" id="cd01742">
    <property type="entry name" value="GATase1_GMP_Synthase"/>
    <property type="match status" value="1"/>
</dbReference>
<dbReference type="FunFam" id="3.40.50.880:FF:000047">
    <property type="entry name" value="GMP synthase [glutamine-hydrolyzing] subunit A"/>
    <property type="match status" value="1"/>
</dbReference>
<dbReference type="Gene3D" id="3.40.50.880">
    <property type="match status" value="1"/>
</dbReference>
<dbReference type="HAMAP" id="MF_01510">
    <property type="entry name" value="GMP_synthase_A"/>
    <property type="match status" value="1"/>
</dbReference>
<dbReference type="InterPro" id="IPR029062">
    <property type="entry name" value="Class_I_gatase-like"/>
</dbReference>
<dbReference type="InterPro" id="IPR017926">
    <property type="entry name" value="GATASE"/>
</dbReference>
<dbReference type="InterPro" id="IPR004739">
    <property type="entry name" value="GMP_synth_GATase"/>
</dbReference>
<dbReference type="InterPro" id="IPR023686">
    <property type="entry name" value="GMP_synthase_A"/>
</dbReference>
<dbReference type="NCBIfam" id="TIGR00888">
    <property type="entry name" value="guaA_Nterm"/>
    <property type="match status" value="1"/>
</dbReference>
<dbReference type="NCBIfam" id="NF001975">
    <property type="entry name" value="PRK00758.1"/>
    <property type="match status" value="1"/>
</dbReference>
<dbReference type="PANTHER" id="PTHR11922:SF2">
    <property type="entry name" value="GMP SYNTHASE [GLUTAMINE-HYDROLYZING]"/>
    <property type="match status" value="1"/>
</dbReference>
<dbReference type="PANTHER" id="PTHR11922">
    <property type="entry name" value="GMP SYNTHASE-RELATED"/>
    <property type="match status" value="1"/>
</dbReference>
<dbReference type="Pfam" id="PF00117">
    <property type="entry name" value="GATase"/>
    <property type="match status" value="1"/>
</dbReference>
<dbReference type="PRINTS" id="PR00097">
    <property type="entry name" value="ANTSNTHASEII"/>
</dbReference>
<dbReference type="PRINTS" id="PR00096">
    <property type="entry name" value="GATASE"/>
</dbReference>
<dbReference type="SUPFAM" id="SSF52317">
    <property type="entry name" value="Class I glutamine amidotransferase-like"/>
    <property type="match status" value="1"/>
</dbReference>
<dbReference type="PROSITE" id="PS51273">
    <property type="entry name" value="GATASE_TYPE_1"/>
    <property type="match status" value="1"/>
</dbReference>
<name>GUAAA_METB6</name>
<protein>
    <recommendedName>
        <fullName evidence="1">GMP synthase [glutamine-hydrolyzing] subunit A</fullName>
        <ecNumber evidence="1">6.3.5.2</ecNumber>
    </recommendedName>
    <alternativeName>
        <fullName evidence="1">Glutamine amidotransferase</fullName>
    </alternativeName>
</protein>